<accession>B7LXX2</accession>
<name>KDSA_ECO8A</name>
<organism>
    <name type="scientific">Escherichia coli O8 (strain IAI1)</name>
    <dbReference type="NCBI Taxonomy" id="585034"/>
    <lineage>
        <taxon>Bacteria</taxon>
        <taxon>Pseudomonadati</taxon>
        <taxon>Pseudomonadota</taxon>
        <taxon>Gammaproteobacteria</taxon>
        <taxon>Enterobacterales</taxon>
        <taxon>Enterobacteriaceae</taxon>
        <taxon>Escherichia</taxon>
    </lineage>
</organism>
<reference key="1">
    <citation type="journal article" date="2009" name="PLoS Genet.">
        <title>Organised genome dynamics in the Escherichia coli species results in highly diverse adaptive paths.</title>
        <authorList>
            <person name="Touchon M."/>
            <person name="Hoede C."/>
            <person name="Tenaillon O."/>
            <person name="Barbe V."/>
            <person name="Baeriswyl S."/>
            <person name="Bidet P."/>
            <person name="Bingen E."/>
            <person name="Bonacorsi S."/>
            <person name="Bouchier C."/>
            <person name="Bouvet O."/>
            <person name="Calteau A."/>
            <person name="Chiapello H."/>
            <person name="Clermont O."/>
            <person name="Cruveiller S."/>
            <person name="Danchin A."/>
            <person name="Diard M."/>
            <person name="Dossat C."/>
            <person name="Karoui M.E."/>
            <person name="Frapy E."/>
            <person name="Garry L."/>
            <person name="Ghigo J.M."/>
            <person name="Gilles A.M."/>
            <person name="Johnson J."/>
            <person name="Le Bouguenec C."/>
            <person name="Lescat M."/>
            <person name="Mangenot S."/>
            <person name="Martinez-Jehanne V."/>
            <person name="Matic I."/>
            <person name="Nassif X."/>
            <person name="Oztas S."/>
            <person name="Petit M.A."/>
            <person name="Pichon C."/>
            <person name="Rouy Z."/>
            <person name="Ruf C.S."/>
            <person name="Schneider D."/>
            <person name="Tourret J."/>
            <person name="Vacherie B."/>
            <person name="Vallenet D."/>
            <person name="Medigue C."/>
            <person name="Rocha E.P.C."/>
            <person name="Denamur E."/>
        </authorList>
    </citation>
    <scope>NUCLEOTIDE SEQUENCE [LARGE SCALE GENOMIC DNA]</scope>
    <source>
        <strain>IAI1</strain>
    </source>
</reference>
<sequence length="284" mass="30833">MKQKVVSIGDINVANDLPFVLFGGMNVLESRDLAMRICEHYVTVTQKLGIPYVFKASFDKANRSSIHSYRGPGLEEGMKIFQELKQTFGVKIITDVHEPSQAQPVADVVDVIQLPAFLARQTDLVEAMAKTGAVINVKKPQFVSPGQMGNIVDKFKEGGNEKVILCDRGANFGYDNLVVDMLGFSIMKKVSGNSPVIFDVTHALQCRDPFGAASGGRRAQVAELARAGMAVGLAGLFIEAHPDPEHAKCDGPSALPLAKLEPFLKQMKAIDDLVKGFEELDTSK</sequence>
<proteinExistence type="inferred from homology"/>
<evidence type="ECO:0000255" key="1">
    <source>
        <dbReference type="HAMAP-Rule" id="MF_00056"/>
    </source>
</evidence>
<keyword id="KW-0963">Cytoplasm</keyword>
<keyword id="KW-0448">Lipopolysaccharide biosynthesis</keyword>
<keyword id="KW-0808">Transferase</keyword>
<gene>
    <name evidence="1" type="primary">kdsA</name>
    <name type="ordered locus">ECIAI1_1236</name>
</gene>
<dbReference type="EC" id="2.5.1.55" evidence="1"/>
<dbReference type="EMBL" id="CU928160">
    <property type="protein sequence ID" value="CAQ98095.1"/>
    <property type="molecule type" value="Genomic_DNA"/>
</dbReference>
<dbReference type="RefSeq" id="WP_000811065.1">
    <property type="nucleotide sequence ID" value="NC_011741.1"/>
</dbReference>
<dbReference type="SMR" id="B7LXX2"/>
<dbReference type="GeneID" id="75203328"/>
<dbReference type="KEGG" id="ecr:ECIAI1_1236"/>
<dbReference type="HOGENOM" id="CLU_036666_0_0_6"/>
<dbReference type="UniPathway" id="UPA00030"/>
<dbReference type="UniPathway" id="UPA00357">
    <property type="reaction ID" value="UER00474"/>
</dbReference>
<dbReference type="GO" id="GO:0005737">
    <property type="term" value="C:cytoplasm"/>
    <property type="evidence" value="ECO:0007669"/>
    <property type="project" value="UniProtKB-SubCell"/>
</dbReference>
<dbReference type="GO" id="GO:0008676">
    <property type="term" value="F:3-deoxy-8-phosphooctulonate synthase activity"/>
    <property type="evidence" value="ECO:0007669"/>
    <property type="project" value="UniProtKB-UniRule"/>
</dbReference>
<dbReference type="GO" id="GO:0019294">
    <property type="term" value="P:keto-3-deoxy-D-manno-octulosonic acid biosynthetic process"/>
    <property type="evidence" value="ECO:0007669"/>
    <property type="project" value="UniProtKB-UniRule"/>
</dbReference>
<dbReference type="FunFam" id="3.20.20.70:FF:000058">
    <property type="entry name" value="2-dehydro-3-deoxyphosphooctonate aldolase"/>
    <property type="match status" value="1"/>
</dbReference>
<dbReference type="Gene3D" id="3.20.20.70">
    <property type="entry name" value="Aldolase class I"/>
    <property type="match status" value="1"/>
</dbReference>
<dbReference type="HAMAP" id="MF_00056">
    <property type="entry name" value="KDO8P_synth"/>
    <property type="match status" value="1"/>
</dbReference>
<dbReference type="InterPro" id="IPR013785">
    <property type="entry name" value="Aldolase_TIM"/>
</dbReference>
<dbReference type="InterPro" id="IPR006218">
    <property type="entry name" value="DAHP1/KDSA"/>
</dbReference>
<dbReference type="InterPro" id="IPR006269">
    <property type="entry name" value="KDO8P_synthase"/>
</dbReference>
<dbReference type="NCBIfam" id="TIGR01362">
    <property type="entry name" value="KDO8P_synth"/>
    <property type="match status" value="1"/>
</dbReference>
<dbReference type="NCBIfam" id="NF003543">
    <property type="entry name" value="PRK05198.1"/>
    <property type="match status" value="1"/>
</dbReference>
<dbReference type="NCBIfam" id="NF009109">
    <property type="entry name" value="PRK12457.1"/>
    <property type="match status" value="1"/>
</dbReference>
<dbReference type="PANTHER" id="PTHR21057">
    <property type="entry name" value="PHOSPHO-2-DEHYDRO-3-DEOXYHEPTONATE ALDOLASE"/>
    <property type="match status" value="1"/>
</dbReference>
<dbReference type="Pfam" id="PF00793">
    <property type="entry name" value="DAHP_synth_1"/>
    <property type="match status" value="1"/>
</dbReference>
<dbReference type="SUPFAM" id="SSF51569">
    <property type="entry name" value="Aldolase"/>
    <property type="match status" value="1"/>
</dbReference>
<feature type="chain" id="PRO_1000116878" description="2-dehydro-3-deoxyphosphooctonate aldolase">
    <location>
        <begin position="1"/>
        <end position="284"/>
    </location>
</feature>
<comment type="catalytic activity">
    <reaction evidence="1">
        <text>D-arabinose 5-phosphate + phosphoenolpyruvate + H2O = 3-deoxy-alpha-D-manno-2-octulosonate-8-phosphate + phosphate</text>
        <dbReference type="Rhea" id="RHEA:14053"/>
        <dbReference type="ChEBI" id="CHEBI:15377"/>
        <dbReference type="ChEBI" id="CHEBI:43474"/>
        <dbReference type="ChEBI" id="CHEBI:57693"/>
        <dbReference type="ChEBI" id="CHEBI:58702"/>
        <dbReference type="ChEBI" id="CHEBI:85985"/>
        <dbReference type="EC" id="2.5.1.55"/>
    </reaction>
</comment>
<comment type="pathway">
    <text evidence="1">Carbohydrate biosynthesis; 3-deoxy-D-manno-octulosonate biosynthesis; 3-deoxy-D-manno-octulosonate from D-ribulose 5-phosphate: step 2/3.</text>
</comment>
<comment type="pathway">
    <text evidence="1">Bacterial outer membrane biogenesis; lipopolysaccharide biosynthesis.</text>
</comment>
<comment type="subcellular location">
    <subcellularLocation>
        <location evidence="1">Cytoplasm</location>
    </subcellularLocation>
</comment>
<comment type="similarity">
    <text evidence="1">Belongs to the KdsA family.</text>
</comment>
<protein>
    <recommendedName>
        <fullName evidence="1">2-dehydro-3-deoxyphosphooctonate aldolase</fullName>
        <ecNumber evidence="1">2.5.1.55</ecNumber>
    </recommendedName>
    <alternativeName>
        <fullName evidence="1">3-deoxy-D-manno-octulosonic acid 8-phosphate synthase</fullName>
    </alternativeName>
    <alternativeName>
        <fullName evidence="1">KDO-8-phosphate synthase</fullName>
        <shortName evidence="1">KDO 8-P synthase</shortName>
        <shortName evidence="1">KDOPS</shortName>
    </alternativeName>
    <alternativeName>
        <fullName evidence="1">Phospho-2-dehydro-3-deoxyoctonate aldolase</fullName>
    </alternativeName>
</protein>